<sequence>MDSSNCKVIAPLLSQRYRRMVTKDGHSTLQMDGAQRGLAYLRDAWGILMDMRWRWMMLVFSASFVVHWLVFAVLWYVLAEMNGDLELDHDAPPENHTICVKYITSFTAAFSFSLETQLTIGYGTMFPSGDCPSAIALLAIQMLLGLMLEAFITGAFVAKIARPKNRAFSIRFTDTAVVAHMDGKPNLIFQVANTRPSPLTSVRVSAVLYQERENGKLYQTSVDFHLDGISSDECPFFIFPLTYYHSITPSSPLATLLQHENPSHFELVVFLSAMQEGTGEICQRRTSYLPSEIMLHHCFASLLTRGSKGEYQIKMENFDKTVPEFPTPLVSKSPNRTDLDIHINGQSIDNFQISETGLTE</sequence>
<reference key="1">
    <citation type="journal article" date="1998" name="FEBS Lett.">
        <title>Cloning and characterization of a novel human inwardly rectifying potassium channel predominantly expressed in small intestine.</title>
        <authorList>
            <person name="Partiseti M."/>
            <person name="Collura V."/>
            <person name="Agnel M."/>
            <person name="Culouscou J.-M."/>
            <person name="Graham D."/>
        </authorList>
    </citation>
    <scope>NUCLEOTIDE SEQUENCE [MRNA] (ISOFORM 1)</scope>
    <scope>TRANSPORTER ACTIVITY</scope>
    <scope>ACTIVITY REGULATION</scope>
    <scope>TISSUE SPECIFICITY</scope>
    <scope>VARIANT ILE-175</scope>
    <source>
        <tissue>Brain</tissue>
    </source>
</reference>
<reference key="2">
    <citation type="journal article" date="1998" name="Neuron">
        <title>A novel inward rectifier K+ channel with unique pore properties.</title>
        <authorList>
            <person name="Krapivinsky G."/>
            <person name="Medina I."/>
            <person name="Eng L."/>
            <person name="Krapivinsky L."/>
            <person name="Yang Y."/>
            <person name="Clapham D.E."/>
        </authorList>
    </citation>
    <scope>NUCLEOTIDE SEQUENCE [MRNA] (ISOFORM 1)</scope>
    <scope>TRANSPORTER ACTIVITY</scope>
    <scope>ACTIVITY REGULATION</scope>
    <scope>MUTAGENESIS OF SER-111; MET-125 AND GLY-129</scope>
    <source>
        <tissue>Brain</tissue>
    </source>
</reference>
<reference key="3">
    <citation type="journal article" date="2008" name="Exp. Eye Res.">
        <title>Expression of Kir7.1 and a novel Kir7.1 splice variant in native human retinal pigment epithelium.</title>
        <authorList>
            <person name="Yang D."/>
            <person name="Swaminathan A."/>
            <person name="Zhang X."/>
            <person name="Hughes B.A."/>
        </authorList>
    </citation>
    <scope>NUCLEOTIDE SEQUENCE [MRNA] (ISOFORMS 1 AND 2)</scope>
    <scope>ALTERNATIVE SPLICING</scope>
    <source>
        <tissue>Eye</tissue>
    </source>
</reference>
<reference key="4">
    <citation type="submission" date="1998-05" db="EMBL/GenBank/DDBJ databases">
        <authorList>
            <person name="Hirose S."/>
            <person name="Suzuki Y."/>
            <person name="Nakamura N."/>
        </authorList>
    </citation>
    <scope>NUCLEOTIDE SEQUENCE [MRNA] (ISOFORM 1)</scope>
    <source>
        <tissue>Small intestine</tissue>
    </source>
</reference>
<reference key="5">
    <citation type="submission" date="1998-05" db="EMBL/GenBank/DDBJ databases">
        <authorList>
            <person name="Nakamura N."/>
            <person name="Matsuki T."/>
            <person name="Suzuki Y."/>
            <person name="Sakuta H."/>
            <person name="Ito T."/>
            <person name="Hirose S."/>
        </authorList>
    </citation>
    <scope>NUCLEOTIDE SEQUENCE [MRNA] (ISOFORM 1)</scope>
</reference>
<reference key="6">
    <citation type="submission" date="1998-05" db="EMBL/GenBank/DDBJ databases">
        <title>Unique epithelial Kir7.1 subunit defines a new subfamily of inwardly rectifying potassium channels.</title>
        <authorList>
            <person name="Doering F."/>
            <person name="Derst C."/>
            <person name="Wischmeyer E."/>
            <person name="Karschin C."/>
            <person name="Daut J."/>
            <person name="Karschin A."/>
        </authorList>
    </citation>
    <scope>NUCLEOTIDE SEQUENCE [MRNA] (ISOFORM 1)</scope>
    <source>
        <tissue>Testis</tissue>
    </source>
</reference>
<reference key="7">
    <citation type="journal article" date="2004" name="Nat. Genet.">
        <title>Complete sequencing and characterization of 21,243 full-length human cDNAs.</title>
        <authorList>
            <person name="Ota T."/>
            <person name="Suzuki Y."/>
            <person name="Nishikawa T."/>
            <person name="Otsuki T."/>
            <person name="Sugiyama T."/>
            <person name="Irie R."/>
            <person name="Wakamatsu A."/>
            <person name="Hayashi K."/>
            <person name="Sato H."/>
            <person name="Nagai K."/>
            <person name="Kimura K."/>
            <person name="Makita H."/>
            <person name="Sekine M."/>
            <person name="Obayashi M."/>
            <person name="Nishi T."/>
            <person name="Shibahara T."/>
            <person name="Tanaka T."/>
            <person name="Ishii S."/>
            <person name="Yamamoto J."/>
            <person name="Saito K."/>
            <person name="Kawai Y."/>
            <person name="Isono Y."/>
            <person name="Nakamura Y."/>
            <person name="Nagahari K."/>
            <person name="Murakami K."/>
            <person name="Yasuda T."/>
            <person name="Iwayanagi T."/>
            <person name="Wagatsuma M."/>
            <person name="Shiratori A."/>
            <person name="Sudo H."/>
            <person name="Hosoiri T."/>
            <person name="Kaku Y."/>
            <person name="Kodaira H."/>
            <person name="Kondo H."/>
            <person name="Sugawara M."/>
            <person name="Takahashi M."/>
            <person name="Kanda K."/>
            <person name="Yokoi T."/>
            <person name="Furuya T."/>
            <person name="Kikkawa E."/>
            <person name="Omura Y."/>
            <person name="Abe K."/>
            <person name="Kamihara K."/>
            <person name="Katsuta N."/>
            <person name="Sato K."/>
            <person name="Tanikawa M."/>
            <person name="Yamazaki M."/>
            <person name="Ninomiya K."/>
            <person name="Ishibashi T."/>
            <person name="Yamashita H."/>
            <person name="Murakawa K."/>
            <person name="Fujimori K."/>
            <person name="Tanai H."/>
            <person name="Kimata M."/>
            <person name="Watanabe M."/>
            <person name="Hiraoka S."/>
            <person name="Chiba Y."/>
            <person name="Ishida S."/>
            <person name="Ono Y."/>
            <person name="Takiguchi S."/>
            <person name="Watanabe S."/>
            <person name="Yosida M."/>
            <person name="Hotuta T."/>
            <person name="Kusano J."/>
            <person name="Kanehori K."/>
            <person name="Takahashi-Fujii A."/>
            <person name="Hara H."/>
            <person name="Tanase T.-O."/>
            <person name="Nomura Y."/>
            <person name="Togiya S."/>
            <person name="Komai F."/>
            <person name="Hara R."/>
            <person name="Takeuchi K."/>
            <person name="Arita M."/>
            <person name="Imose N."/>
            <person name="Musashino K."/>
            <person name="Yuuki H."/>
            <person name="Oshima A."/>
            <person name="Sasaki N."/>
            <person name="Aotsuka S."/>
            <person name="Yoshikawa Y."/>
            <person name="Matsunawa H."/>
            <person name="Ichihara T."/>
            <person name="Shiohata N."/>
            <person name="Sano S."/>
            <person name="Moriya S."/>
            <person name="Momiyama H."/>
            <person name="Satoh N."/>
            <person name="Takami S."/>
            <person name="Terashima Y."/>
            <person name="Suzuki O."/>
            <person name="Nakagawa S."/>
            <person name="Senoh A."/>
            <person name="Mizoguchi H."/>
            <person name="Goto Y."/>
            <person name="Shimizu F."/>
            <person name="Wakebe H."/>
            <person name="Hishigaki H."/>
            <person name="Watanabe T."/>
            <person name="Sugiyama A."/>
            <person name="Takemoto M."/>
            <person name="Kawakami B."/>
            <person name="Yamazaki M."/>
            <person name="Watanabe K."/>
            <person name="Kumagai A."/>
            <person name="Itakura S."/>
            <person name="Fukuzumi Y."/>
            <person name="Fujimori Y."/>
            <person name="Komiyama M."/>
            <person name="Tashiro H."/>
            <person name="Tanigami A."/>
            <person name="Fujiwara T."/>
            <person name="Ono T."/>
            <person name="Yamada K."/>
            <person name="Fujii Y."/>
            <person name="Ozaki K."/>
            <person name="Hirao M."/>
            <person name="Ohmori Y."/>
            <person name="Kawabata A."/>
            <person name="Hikiji T."/>
            <person name="Kobatake N."/>
            <person name="Inagaki H."/>
            <person name="Ikema Y."/>
            <person name="Okamoto S."/>
            <person name="Okitani R."/>
            <person name="Kawakami T."/>
            <person name="Noguchi S."/>
            <person name="Itoh T."/>
            <person name="Shigeta K."/>
            <person name="Senba T."/>
            <person name="Matsumura K."/>
            <person name="Nakajima Y."/>
            <person name="Mizuno T."/>
            <person name="Morinaga M."/>
            <person name="Sasaki M."/>
            <person name="Togashi T."/>
            <person name="Oyama M."/>
            <person name="Hata H."/>
            <person name="Watanabe M."/>
            <person name="Komatsu T."/>
            <person name="Mizushima-Sugano J."/>
            <person name="Satoh T."/>
            <person name="Shirai Y."/>
            <person name="Takahashi Y."/>
            <person name="Nakagawa K."/>
            <person name="Okumura K."/>
            <person name="Nagase T."/>
            <person name="Nomura N."/>
            <person name="Kikuchi H."/>
            <person name="Masuho Y."/>
            <person name="Yamashita R."/>
            <person name="Nakai K."/>
            <person name="Yada T."/>
            <person name="Nakamura Y."/>
            <person name="Ohara O."/>
            <person name="Isogai T."/>
            <person name="Sugano S."/>
        </authorList>
    </citation>
    <scope>NUCLEOTIDE SEQUENCE [LARGE SCALE MRNA] (ISOFORM 2)</scope>
    <source>
        <tissue>Hippocampus</tissue>
    </source>
</reference>
<reference key="8">
    <citation type="journal article" date="2005" name="Nature">
        <title>Generation and annotation of the DNA sequences of human chromosomes 2 and 4.</title>
        <authorList>
            <person name="Hillier L.W."/>
            <person name="Graves T.A."/>
            <person name="Fulton R.S."/>
            <person name="Fulton L.A."/>
            <person name="Pepin K.H."/>
            <person name="Minx P."/>
            <person name="Wagner-McPherson C."/>
            <person name="Layman D."/>
            <person name="Wylie K."/>
            <person name="Sekhon M."/>
            <person name="Becker M.C."/>
            <person name="Fewell G.A."/>
            <person name="Delehaunty K.D."/>
            <person name="Miner T.L."/>
            <person name="Nash W.E."/>
            <person name="Kremitzki C."/>
            <person name="Oddy L."/>
            <person name="Du H."/>
            <person name="Sun H."/>
            <person name="Bradshaw-Cordum H."/>
            <person name="Ali J."/>
            <person name="Carter J."/>
            <person name="Cordes M."/>
            <person name="Harris A."/>
            <person name="Isak A."/>
            <person name="van Brunt A."/>
            <person name="Nguyen C."/>
            <person name="Du F."/>
            <person name="Courtney L."/>
            <person name="Kalicki J."/>
            <person name="Ozersky P."/>
            <person name="Abbott S."/>
            <person name="Armstrong J."/>
            <person name="Belter E.A."/>
            <person name="Caruso L."/>
            <person name="Cedroni M."/>
            <person name="Cotton M."/>
            <person name="Davidson T."/>
            <person name="Desai A."/>
            <person name="Elliott G."/>
            <person name="Erb T."/>
            <person name="Fronick C."/>
            <person name="Gaige T."/>
            <person name="Haakenson W."/>
            <person name="Haglund K."/>
            <person name="Holmes A."/>
            <person name="Harkins R."/>
            <person name="Kim K."/>
            <person name="Kruchowski S.S."/>
            <person name="Strong C.M."/>
            <person name="Grewal N."/>
            <person name="Goyea E."/>
            <person name="Hou S."/>
            <person name="Levy A."/>
            <person name="Martinka S."/>
            <person name="Mead K."/>
            <person name="McLellan M.D."/>
            <person name="Meyer R."/>
            <person name="Randall-Maher J."/>
            <person name="Tomlinson C."/>
            <person name="Dauphin-Kohlberg S."/>
            <person name="Kozlowicz-Reilly A."/>
            <person name="Shah N."/>
            <person name="Swearengen-Shahid S."/>
            <person name="Snider J."/>
            <person name="Strong J.T."/>
            <person name="Thompson J."/>
            <person name="Yoakum M."/>
            <person name="Leonard S."/>
            <person name="Pearman C."/>
            <person name="Trani L."/>
            <person name="Radionenko M."/>
            <person name="Waligorski J.E."/>
            <person name="Wang C."/>
            <person name="Rock S.M."/>
            <person name="Tin-Wollam A.-M."/>
            <person name="Maupin R."/>
            <person name="Latreille P."/>
            <person name="Wendl M.C."/>
            <person name="Yang S.-P."/>
            <person name="Pohl C."/>
            <person name="Wallis J.W."/>
            <person name="Spieth J."/>
            <person name="Bieri T.A."/>
            <person name="Berkowicz N."/>
            <person name="Nelson J.O."/>
            <person name="Osborne J."/>
            <person name="Ding L."/>
            <person name="Meyer R."/>
            <person name="Sabo A."/>
            <person name="Shotland Y."/>
            <person name="Sinha P."/>
            <person name="Wohldmann P.E."/>
            <person name="Cook L.L."/>
            <person name="Hickenbotham M.T."/>
            <person name="Eldred J."/>
            <person name="Williams D."/>
            <person name="Jones T.A."/>
            <person name="She X."/>
            <person name="Ciccarelli F.D."/>
            <person name="Izaurralde E."/>
            <person name="Taylor J."/>
            <person name="Schmutz J."/>
            <person name="Myers R.M."/>
            <person name="Cox D.R."/>
            <person name="Huang X."/>
            <person name="McPherson J.D."/>
            <person name="Mardis E.R."/>
            <person name="Clifton S.W."/>
            <person name="Warren W.C."/>
            <person name="Chinwalla A.T."/>
            <person name="Eddy S.R."/>
            <person name="Marra M.A."/>
            <person name="Ovcharenko I."/>
            <person name="Furey T.S."/>
            <person name="Miller W."/>
            <person name="Eichler E.E."/>
            <person name="Bork P."/>
            <person name="Suyama M."/>
            <person name="Torrents D."/>
            <person name="Waterston R.H."/>
            <person name="Wilson R.K."/>
        </authorList>
    </citation>
    <scope>NUCLEOTIDE SEQUENCE [LARGE SCALE GENOMIC DNA]</scope>
</reference>
<reference key="9">
    <citation type="submission" date="2005-07" db="EMBL/GenBank/DDBJ databases">
        <authorList>
            <person name="Mural R.J."/>
            <person name="Istrail S."/>
            <person name="Sutton G.G."/>
            <person name="Florea L."/>
            <person name="Halpern A.L."/>
            <person name="Mobarry C.M."/>
            <person name="Lippert R."/>
            <person name="Walenz B."/>
            <person name="Shatkay H."/>
            <person name="Dew I."/>
            <person name="Miller J.R."/>
            <person name="Flanigan M.J."/>
            <person name="Edwards N.J."/>
            <person name="Bolanos R."/>
            <person name="Fasulo D."/>
            <person name="Halldorsson B.V."/>
            <person name="Hannenhalli S."/>
            <person name="Turner R."/>
            <person name="Yooseph S."/>
            <person name="Lu F."/>
            <person name="Nusskern D.R."/>
            <person name="Shue B.C."/>
            <person name="Zheng X.H."/>
            <person name="Zhong F."/>
            <person name="Delcher A.L."/>
            <person name="Huson D.H."/>
            <person name="Kravitz S.A."/>
            <person name="Mouchard L."/>
            <person name="Reinert K."/>
            <person name="Remington K.A."/>
            <person name="Clark A.G."/>
            <person name="Waterman M.S."/>
            <person name="Eichler E.E."/>
            <person name="Adams M.D."/>
            <person name="Hunkapiller M.W."/>
            <person name="Myers E.W."/>
            <person name="Venter J.C."/>
        </authorList>
    </citation>
    <scope>NUCLEOTIDE SEQUENCE [LARGE SCALE GENOMIC DNA]</scope>
</reference>
<reference key="10">
    <citation type="journal article" date="2004" name="Genome Res.">
        <title>The status, quality, and expansion of the NIH full-length cDNA project: the Mammalian Gene Collection (MGC).</title>
        <authorList>
            <consortium name="The MGC Project Team"/>
        </authorList>
    </citation>
    <scope>NUCLEOTIDE SEQUENCE [LARGE SCALE MRNA] (ISOFORM 1)</scope>
    <scope>VARIANTS ILE-175; GLN-290 AND CYS-309</scope>
    <source>
        <tissue>Brain</tissue>
    </source>
</reference>
<reference key="11">
    <citation type="journal article" date="1998" name="Genomics">
        <title>Partial gene structure and assignment to chromosome 2q37 of the human inwardly rectifying K+ channel (Kir7.1) gene (KCNJ13).</title>
        <authorList>
            <person name="Derst C."/>
            <person name="Doring F."/>
            <person name="Preisig-M ueller R."/>
            <person name="Daut J."/>
            <person name="Karschin A."/>
            <person name="Jeck N."/>
            <person name="Weber S."/>
            <person name="Engel H."/>
            <person name="Grzeschik K.-H."/>
        </authorList>
    </citation>
    <scope>NUCLEOTIDE SEQUENCE [GENOMIC DNA] OF 147-175</scope>
</reference>
<reference key="12">
    <citation type="journal article" date="2008" name="Biochem. Biophys. Res. Commun.">
        <title>Dual regulation of renal Kir7.1 potassium channels by protein Kinase A and protein Kinase C.</title>
        <authorList>
            <person name="Zhang W."/>
            <person name="Zitron E."/>
            <person name="Bloehs R."/>
            <person name="Muller-Krebs S."/>
            <person name="Scholz E."/>
            <person name="Zeier M."/>
            <person name="Katus H."/>
            <person name="Karle C."/>
            <person name="Schwenger V."/>
        </authorList>
    </citation>
    <scope>PHOSPHORYLATION AT SER-201 AND SER-287</scope>
</reference>
<reference key="13">
    <citation type="journal article" date="2008" name="Am. J. Hum. Genet.">
        <title>Mutations in KCNJ13 cause autosomal-dominant snowflake vitreoretinal degeneration.</title>
        <authorList>
            <person name="Hejtmancik J.F."/>
            <person name="Jiao X."/>
            <person name="Li A."/>
            <person name="Sergeev Y.V."/>
            <person name="Ding X."/>
            <person name="Sharma A.K."/>
            <person name="Chan C.-C."/>
            <person name="Medina I."/>
            <person name="Edwards A.O."/>
        </authorList>
    </citation>
    <scope>VARIANT SVD TRP-162</scope>
    <scope>CHARACTERIZATION OF VARIANT SVD TRP-162</scope>
</reference>
<reference key="14">
    <citation type="journal article" date="2011" name="Am. J. Hum. Genet.">
        <title>Recessive mutations in KCNJ13, encoding an inwardly rectifying potassium channel subunit, cause leber congenital amaurosis.</title>
        <authorList>
            <person name="Sergouniotis P.I."/>
            <person name="Davidson A.E."/>
            <person name="Mackay D.S."/>
            <person name="Li Z."/>
            <person name="Yang X."/>
            <person name="Plagnol V."/>
            <person name="Moore A.T."/>
            <person name="Webster A.R."/>
        </authorList>
    </citation>
    <scope>VARIANTS LCA16 ARG-117 AND PRO-241</scope>
    <scope>VARIANTS GLN-162 AND ALA-276</scope>
</reference>
<keyword id="KW-0025">Alternative splicing</keyword>
<keyword id="KW-0898">Cataract</keyword>
<keyword id="KW-1003">Cell membrane</keyword>
<keyword id="KW-0225">Disease variant</keyword>
<keyword id="KW-0407">Ion channel</keyword>
<keyword id="KW-0406">Ion transport</keyword>
<keyword id="KW-0901">Leber congenital amaurosis</keyword>
<keyword id="KW-0472">Membrane</keyword>
<keyword id="KW-0597">Phosphoprotein</keyword>
<keyword id="KW-0630">Potassium</keyword>
<keyword id="KW-0633">Potassium transport</keyword>
<keyword id="KW-1267">Proteomics identification</keyword>
<keyword id="KW-1185">Reference proteome</keyword>
<keyword id="KW-0812">Transmembrane</keyword>
<keyword id="KW-1133">Transmembrane helix</keyword>
<keyword id="KW-0813">Transport</keyword>
<keyword id="KW-0851">Voltage-gated channel</keyword>
<protein>
    <recommendedName>
        <fullName>Inward rectifier potassium channel 13</fullName>
    </recommendedName>
    <alternativeName>
        <fullName evidence="14 15">Inward rectifier K(+) channel Kir7.1</fullName>
    </alternativeName>
    <alternativeName>
        <fullName>Potassium channel, inwardly rectifying subfamily J member 13</fullName>
    </alternativeName>
</protein>
<evidence type="ECO:0000250" key="1"/>
<evidence type="ECO:0000250" key="2">
    <source>
        <dbReference type="UniProtKB" id="E1BN00"/>
    </source>
</evidence>
<evidence type="ECO:0000250" key="3">
    <source>
        <dbReference type="UniProtKB" id="P49655"/>
    </source>
</evidence>
<evidence type="ECO:0000250" key="4">
    <source>
        <dbReference type="UniProtKB" id="P86046"/>
    </source>
</evidence>
<evidence type="ECO:0000255" key="5"/>
<evidence type="ECO:0000269" key="6">
    <source>
    </source>
</evidence>
<evidence type="ECO:0000269" key="7">
    <source>
    </source>
</evidence>
<evidence type="ECO:0000269" key="8">
    <source>
    </source>
</evidence>
<evidence type="ECO:0000269" key="9">
    <source>
    </source>
</evidence>
<evidence type="ECO:0000269" key="10">
    <source>
    </source>
</evidence>
<evidence type="ECO:0000269" key="11">
    <source>
    </source>
</evidence>
<evidence type="ECO:0000303" key="12">
    <source>
    </source>
</evidence>
<evidence type="ECO:0000303" key="13">
    <source>
    </source>
</evidence>
<evidence type="ECO:0000303" key="14">
    <source>
    </source>
</evidence>
<evidence type="ECO:0000303" key="15">
    <source>
    </source>
</evidence>
<evidence type="ECO:0000305" key="16"/>
<comment type="function">
    <text evidence="10 11">Inward rectifier potassium channels are characterized by a greater tendency to allow potassium to flow into the cell rather than out of it. Their voltage dependence is regulated by the concentration of extracellular potassium; as external potassium is raised, the voltage range of the channel opening shifts to more positive voltages. The inward rectification is mainly due to the blockage of outward current by internal magnesium. KCNJ13 has a very low single channel conductance, low sensitivity to block by external barium and cesium, and no dependence of its inward rectification properties on the internal blocking particle magnesium.</text>
</comment>
<comment type="catalytic activity">
    <reaction evidence="10 11">
        <text>K(+)(in) = K(+)(out)</text>
        <dbReference type="Rhea" id="RHEA:29463"/>
        <dbReference type="ChEBI" id="CHEBI:29103"/>
    </reaction>
</comment>
<comment type="activity regulation">
    <text evidence="10 11">Inhibited by Ba(2+) and Cs(+), although sensitivity to those inhibitors is much lower than in other Kir channels.</text>
</comment>
<comment type="subunit">
    <text evidence="2 3">Homotetramer. Interacts with RAB28; the interaction may facilitate cone outer segments phagocytosis (By similarity).</text>
</comment>
<comment type="subcellular location">
    <subcellularLocation>
        <location evidence="5">Membrane</location>
        <topology evidence="5">Multi-pass membrane protein</topology>
    </subcellularLocation>
    <subcellularLocation>
        <location evidence="4">Cell membrane</location>
    </subcellularLocation>
    <text evidence="4">Localized at the retinal pigmented epithelium (RPE) apical microvilli.</text>
</comment>
<comment type="alternative products">
    <event type="alternative splicing"/>
    <isoform>
        <id>O60928-1</id>
        <name>1</name>
        <sequence type="displayed"/>
    </isoform>
    <isoform>
        <id>O60928-2</id>
        <name>2</name>
        <name>Kir7.1S</name>
        <sequence type="described" ref="VSP_042627 VSP_042628"/>
    </isoform>
</comment>
<comment type="tissue specificity">
    <text evidence="11">Predominantly expressed in small intestine. Expression is also detected in stomach, kidney, and all central nervous system regions tested with the exception of spinal cord.</text>
</comment>
<comment type="PTM">
    <text evidence="8">Phosphorylation at Ser-201 by PKC strongly inhibits ionic currents, while phosphorylation at Ser-287 by PKA increases them.</text>
</comment>
<comment type="disease" evidence="7">
    <disease id="DI-02314">
        <name>Snowflake vitreoretinal degeneration</name>
        <acronym>SVD</acronym>
        <description>Developmental and progressive hereditary eye disorder that affects multiple tissues within the eye. Diagnostic features of SVD include fibrillar degeneration of the vitreous humor, early-onset cataract, minute crystalline deposits in the neurosensory retina, and retinal detachment.</description>
        <dbReference type="MIM" id="193230"/>
    </disease>
    <text>The disease is caused by variants affecting the gene represented in this entry.</text>
</comment>
<comment type="disease" evidence="9">
    <disease id="DI-03236">
        <name>Leber congenital amaurosis 16</name>
        <acronym>LCA16</acronym>
        <description>A severe dystrophy of the retina, typically becoming evident in the first years of life. Visual function is usually poor and often accompanied by nystagmus, sluggish or near-absent pupillary responses, photophobia, high hyperopia and keratoconus.</description>
        <dbReference type="MIM" id="614186"/>
    </disease>
    <text>The disease is caused by variants affecting the gene represented in this entry.</text>
</comment>
<comment type="similarity">
    <text evidence="16">Belongs to the inward rectifier-type potassium channel (TC 1.A.2.1) family. KCNJ13 subfamily.</text>
</comment>
<organism>
    <name type="scientific">Homo sapiens</name>
    <name type="common">Human</name>
    <dbReference type="NCBI Taxonomy" id="9606"/>
    <lineage>
        <taxon>Eukaryota</taxon>
        <taxon>Metazoa</taxon>
        <taxon>Chordata</taxon>
        <taxon>Craniata</taxon>
        <taxon>Vertebrata</taxon>
        <taxon>Euteleostomi</taxon>
        <taxon>Mammalia</taxon>
        <taxon>Eutheria</taxon>
        <taxon>Euarchontoglires</taxon>
        <taxon>Primates</taxon>
        <taxon>Haplorrhini</taxon>
        <taxon>Catarrhini</taxon>
        <taxon>Hominidae</taxon>
        <taxon>Homo</taxon>
    </lineage>
</organism>
<accession>O60928</accession>
<accession>A0PGH1</accession>
<accession>O76023</accession>
<accession>Q53SA1</accession>
<accession>Q8N3Y4</accession>
<proteinExistence type="evidence at protein level"/>
<gene>
    <name type="primary">KCNJ13</name>
</gene>
<name>KCJ13_HUMAN</name>
<feature type="chain" id="PRO_0000154966" description="Inward rectifier potassium channel 13">
    <location>
        <begin position="1"/>
        <end position="360"/>
    </location>
</feature>
<feature type="topological domain" description="Cytoplasmic" evidence="3">
    <location>
        <begin position="1"/>
        <end position="50"/>
    </location>
</feature>
<feature type="transmembrane region" description="Helical; Name=M1" evidence="3">
    <location>
        <begin position="51"/>
        <end position="77"/>
    </location>
</feature>
<feature type="topological domain" description="Extracellular" evidence="3">
    <location>
        <begin position="78"/>
        <end position="105"/>
    </location>
</feature>
<feature type="intramembrane region" description="Helical; Pore-forming" evidence="3">
    <location>
        <begin position="106"/>
        <end position="122"/>
    </location>
</feature>
<feature type="topological domain" description="Extracellular" evidence="3">
    <location>
        <begin position="123"/>
        <end position="131"/>
    </location>
</feature>
<feature type="transmembrane region" description="Helical; Name=M2" evidence="3">
    <location>
        <begin position="132"/>
        <end position="157"/>
    </location>
</feature>
<feature type="topological domain" description="Cytoplasmic" evidence="3">
    <location>
        <begin position="158"/>
        <end position="360"/>
    </location>
</feature>
<feature type="short sequence motif" description="Selectivity filter" evidence="16">
    <location>
        <begin position="119"/>
        <end position="124"/>
    </location>
</feature>
<feature type="site" description="Role in the control of polyamine-mediated channel gating and in the blocking by intracellular magnesium" evidence="1">
    <location>
        <position position="149"/>
    </location>
</feature>
<feature type="modified residue" description="Phosphoserine; by PKC" evidence="8">
    <location>
        <position position="201"/>
    </location>
</feature>
<feature type="modified residue" description="Phosphoserine; by PKA" evidence="8">
    <location>
        <position position="287"/>
    </location>
</feature>
<feature type="splice variant" id="VSP_042627" description="In isoform 2." evidence="12 13">
    <original>YVLAEMNGDLELDHDAPPE</original>
    <variation>CFCGEDCPAKKSSFFNSLY</variation>
    <location>
        <begin position="76"/>
        <end position="94"/>
    </location>
</feature>
<feature type="splice variant" id="VSP_042628" description="In isoform 2." evidence="12 13">
    <location>
        <begin position="95"/>
        <end position="360"/>
    </location>
</feature>
<feature type="sequence variant" id="VAR_066488" description="In LCA16." evidence="9">
    <original>Q</original>
    <variation>R</variation>
    <location>
        <position position="117"/>
    </location>
</feature>
<feature type="sequence variant" id="VAR_066489" description="Found in a patient with autosomal recessive retinitis pigmentosa; dbSNP:rs757304681." evidence="9">
    <original>R</original>
    <variation>Q</variation>
    <location>
        <position position="162"/>
    </location>
</feature>
<feature type="sequence variant" id="VAR_043509" description="In SVD; overexpression produces a non-selective cation current that depolarizes transfected cells and increases their fragility; dbSNP:rs121918542." evidence="7">
    <original>R</original>
    <variation>W</variation>
    <location>
        <position position="162"/>
    </location>
</feature>
<feature type="sequence variant" id="VAR_016193" description="In dbSNP:rs1801251." evidence="6 11">
    <original>T</original>
    <variation>I</variation>
    <location>
        <position position="175"/>
    </location>
</feature>
<feature type="sequence variant" id="VAR_066490" description="In LCA16; dbSNP:rs143607153." evidence="9">
    <original>L</original>
    <variation>P</variation>
    <location>
        <position position="241"/>
    </location>
</feature>
<feature type="sequence variant" id="VAR_066491" description="Found in a patient with autosomal recessive retinitis pigmentosa; dbSNP:rs374411396." evidence="9">
    <original>E</original>
    <variation>A</variation>
    <location>
        <position position="276"/>
    </location>
</feature>
<feature type="sequence variant" id="VAR_043510" description="In dbSNP:rs17853727." evidence="6">
    <original>P</original>
    <variation>Q</variation>
    <location>
        <position position="290"/>
    </location>
</feature>
<feature type="sequence variant" id="VAR_043511" description="In dbSNP:rs17857137." evidence="6">
    <original>G</original>
    <variation>C</variation>
    <location>
        <position position="309"/>
    </location>
</feature>
<feature type="mutagenesis site" description="No effect on channel activity." evidence="10">
    <original>S</original>
    <variation>L</variation>
    <location>
        <position position="111"/>
    </location>
</feature>
<feature type="mutagenesis site" description="Increased channel activity and increased sensitivity to inhibition by Ba(2+)." evidence="10">
    <original>M</original>
    <variation>R</variation>
    <location>
        <position position="125"/>
    </location>
</feature>
<feature type="mutagenesis site" description="Loss of channel activity." evidence="10">
    <original>G</original>
    <variation>E</variation>
    <location>
        <position position="129"/>
    </location>
</feature>
<dbReference type="EMBL" id="AJ007557">
    <property type="protein sequence ID" value="CAA07552.1"/>
    <property type="molecule type" value="mRNA"/>
</dbReference>
<dbReference type="EMBL" id="AF061118">
    <property type="protein sequence ID" value="AAC15769.1"/>
    <property type="molecule type" value="mRNA"/>
</dbReference>
<dbReference type="EMBL" id="AY758240">
    <property type="protein sequence ID" value="AAX08098.1"/>
    <property type="molecule type" value="mRNA"/>
</dbReference>
<dbReference type="EMBL" id="AY758241">
    <property type="protein sequence ID" value="AAX08099.1"/>
    <property type="molecule type" value="mRNA"/>
</dbReference>
<dbReference type="EMBL" id="AB013889">
    <property type="protein sequence ID" value="BAA28271.1"/>
    <property type="molecule type" value="mRNA"/>
</dbReference>
<dbReference type="EMBL" id="AB013891">
    <property type="protein sequence ID" value="BAA28273.1"/>
    <property type="molecule type" value="mRNA"/>
</dbReference>
<dbReference type="EMBL" id="AJ006128">
    <property type="protein sequence ID" value="CAA06878.1"/>
    <property type="molecule type" value="mRNA"/>
</dbReference>
<dbReference type="EMBL" id="AK314019">
    <property type="protein sequence ID" value="BAG36730.1"/>
    <property type="molecule type" value="mRNA"/>
</dbReference>
<dbReference type="EMBL" id="AC064852">
    <property type="protein sequence ID" value="AAX93190.1"/>
    <property type="molecule type" value="Genomic_DNA"/>
</dbReference>
<dbReference type="EMBL" id="CH471063">
    <property type="protein sequence ID" value="EAW71019.1"/>
    <property type="molecule type" value="Genomic_DNA"/>
</dbReference>
<dbReference type="EMBL" id="BC037290">
    <property type="protein sequence ID" value="AAH37290.1"/>
    <property type="molecule type" value="mRNA"/>
</dbReference>
<dbReference type="EMBL" id="AF082182">
    <property type="protein sequence ID" value="AAD08673.1"/>
    <property type="molecule type" value="Genomic_DNA"/>
</dbReference>
<dbReference type="CCDS" id="CCDS2498.1">
    <molecule id="O60928-1"/>
</dbReference>
<dbReference type="CCDS" id="CCDS54437.1">
    <molecule id="O60928-2"/>
</dbReference>
<dbReference type="RefSeq" id="NP_001165887.1">
    <molecule id="O60928-2"/>
    <property type="nucleotide sequence ID" value="NM_001172416.1"/>
</dbReference>
<dbReference type="RefSeq" id="NP_001165888.1">
    <property type="nucleotide sequence ID" value="NM_001172417.1"/>
</dbReference>
<dbReference type="RefSeq" id="NP_002233.2">
    <molecule id="O60928-1"/>
    <property type="nucleotide sequence ID" value="NM_002242.4"/>
</dbReference>
<dbReference type="RefSeq" id="XP_047300209.1">
    <molecule id="O60928-1"/>
    <property type="nucleotide sequence ID" value="XM_047444253.1"/>
</dbReference>
<dbReference type="RefSeq" id="XP_054197914.1">
    <molecule id="O60928-1"/>
    <property type="nucleotide sequence ID" value="XM_054341939.1"/>
</dbReference>
<dbReference type="SMR" id="O60928"/>
<dbReference type="FunCoup" id="O60928">
    <property type="interactions" value="303"/>
</dbReference>
<dbReference type="STRING" id="9606.ENSP00000233826"/>
<dbReference type="BindingDB" id="O60928"/>
<dbReference type="ChEMBL" id="CHEMBL2146349"/>
<dbReference type="GuidetoPHARMACOLOGY" id="443"/>
<dbReference type="TCDB" id="1.A.2.1.8">
    <property type="family name" value="the inward rectifier k(+) channel (irk-c) family"/>
</dbReference>
<dbReference type="iPTMnet" id="O60928"/>
<dbReference type="PhosphoSitePlus" id="O60928"/>
<dbReference type="BioMuta" id="KCNJ13"/>
<dbReference type="MassIVE" id="O60928"/>
<dbReference type="PaxDb" id="9606-ENSP00000233826"/>
<dbReference type="PeptideAtlas" id="O60928"/>
<dbReference type="ProteomicsDB" id="49673">
    <molecule id="O60928-1"/>
</dbReference>
<dbReference type="ProteomicsDB" id="49674">
    <molecule id="O60928-2"/>
</dbReference>
<dbReference type="Antibodypedia" id="34443">
    <property type="antibodies" value="128 antibodies from 26 providers"/>
</dbReference>
<dbReference type="DNASU" id="3769"/>
<dbReference type="Ensembl" id="ENST00000233826.4">
    <molecule id="O60928-1"/>
    <property type="protein sequence ID" value="ENSP00000233826.3"/>
    <property type="gene ID" value="ENSG00000115474.7"/>
</dbReference>
<dbReference type="Ensembl" id="ENST00000409779.1">
    <molecule id="O60928-2"/>
    <property type="protein sequence ID" value="ENSP00000386408.1"/>
    <property type="gene ID" value="ENSG00000115474.7"/>
</dbReference>
<dbReference type="Ensembl" id="ENST00000410029.1">
    <molecule id="O60928-1"/>
    <property type="protein sequence ID" value="ENSP00000386251.1"/>
    <property type="gene ID" value="ENSG00000115474.7"/>
</dbReference>
<dbReference type="GeneID" id="3769"/>
<dbReference type="KEGG" id="hsa:3769"/>
<dbReference type="MANE-Select" id="ENST00000233826.4">
    <property type="protein sequence ID" value="ENSP00000233826.3"/>
    <property type="RefSeq nucleotide sequence ID" value="NM_002242.4"/>
    <property type="RefSeq protein sequence ID" value="NP_002233.2"/>
</dbReference>
<dbReference type="UCSC" id="uc002vtn.4">
    <molecule id="O60928-1"/>
    <property type="organism name" value="human"/>
</dbReference>
<dbReference type="AGR" id="HGNC:6259"/>
<dbReference type="CTD" id="3769"/>
<dbReference type="DisGeNET" id="3769"/>
<dbReference type="GeneCards" id="KCNJ13"/>
<dbReference type="HGNC" id="HGNC:6259">
    <property type="gene designation" value="KCNJ13"/>
</dbReference>
<dbReference type="HPA" id="ENSG00000115474">
    <property type="expression patterns" value="Group enriched (choroid plexus, intestine)"/>
</dbReference>
<dbReference type="MalaCards" id="KCNJ13"/>
<dbReference type="MIM" id="193230">
    <property type="type" value="phenotype"/>
</dbReference>
<dbReference type="MIM" id="603208">
    <property type="type" value="gene"/>
</dbReference>
<dbReference type="MIM" id="614186">
    <property type="type" value="phenotype"/>
</dbReference>
<dbReference type="neXtProt" id="NX_O60928"/>
<dbReference type="OpenTargets" id="ENSG00000115474"/>
<dbReference type="Orphanet" id="65">
    <property type="disease" value="Leber congenital amaurosis"/>
</dbReference>
<dbReference type="Orphanet" id="91496">
    <property type="disease" value="Snowflake vitreoretinal degeneration"/>
</dbReference>
<dbReference type="PharmGKB" id="PA30044"/>
<dbReference type="VEuPathDB" id="HostDB:ENSG00000115474"/>
<dbReference type="eggNOG" id="KOG3827">
    <property type="taxonomic scope" value="Eukaryota"/>
</dbReference>
<dbReference type="GeneTree" id="ENSGT00990000203615"/>
<dbReference type="HOGENOM" id="CLU_022738_3_3_1"/>
<dbReference type="InParanoid" id="O60928"/>
<dbReference type="OMA" id="QGQTCLM"/>
<dbReference type="OrthoDB" id="273257at2759"/>
<dbReference type="PAN-GO" id="O60928">
    <property type="GO annotations" value="4 GO annotations based on evolutionary models"/>
</dbReference>
<dbReference type="PhylomeDB" id="O60928"/>
<dbReference type="TreeFam" id="TF313676"/>
<dbReference type="PathwayCommons" id="O60928"/>
<dbReference type="SignaLink" id="O60928"/>
<dbReference type="SIGNOR" id="O60928"/>
<dbReference type="BioGRID-ORCS" id="3769">
    <property type="hits" value="18 hits in 1144 CRISPR screens"/>
</dbReference>
<dbReference type="ChiTaRS" id="KCNJ13">
    <property type="organism name" value="human"/>
</dbReference>
<dbReference type="GeneWiki" id="KCNJ13"/>
<dbReference type="GenomeRNAi" id="3769"/>
<dbReference type="Pharos" id="O60928">
    <property type="development level" value="Tchem"/>
</dbReference>
<dbReference type="PRO" id="PR:O60928"/>
<dbReference type="Proteomes" id="UP000005640">
    <property type="component" value="Chromosome 2"/>
</dbReference>
<dbReference type="RNAct" id="O60928">
    <property type="molecule type" value="protein"/>
</dbReference>
<dbReference type="Bgee" id="ENSG00000115474">
    <property type="expression patterns" value="Expressed in choroid plexus epithelium and 114 other cell types or tissues"/>
</dbReference>
<dbReference type="ExpressionAtlas" id="O60928">
    <property type="expression patterns" value="baseline and differential"/>
</dbReference>
<dbReference type="GO" id="GO:0034702">
    <property type="term" value="C:monoatomic ion channel complex"/>
    <property type="evidence" value="ECO:0007669"/>
    <property type="project" value="UniProtKB-KW"/>
</dbReference>
<dbReference type="GO" id="GO:0005886">
    <property type="term" value="C:plasma membrane"/>
    <property type="evidence" value="ECO:0000318"/>
    <property type="project" value="GO_Central"/>
</dbReference>
<dbReference type="GO" id="GO:0005242">
    <property type="term" value="F:inward rectifier potassium channel activity"/>
    <property type="evidence" value="ECO:0000318"/>
    <property type="project" value="GO_Central"/>
</dbReference>
<dbReference type="GO" id="GO:1990573">
    <property type="term" value="P:potassium ion import across plasma membrane"/>
    <property type="evidence" value="ECO:0000318"/>
    <property type="project" value="GO_Central"/>
</dbReference>
<dbReference type="GO" id="GO:0006813">
    <property type="term" value="P:potassium ion transport"/>
    <property type="evidence" value="ECO:0000303"/>
    <property type="project" value="UniProtKB"/>
</dbReference>
<dbReference type="GO" id="GO:0034765">
    <property type="term" value="P:regulation of monoatomic ion transmembrane transport"/>
    <property type="evidence" value="ECO:0000318"/>
    <property type="project" value="GO_Central"/>
</dbReference>
<dbReference type="FunFam" id="1.10.287.70:FF:000081">
    <property type="entry name" value="inward rectifier potassium channel 13 isoform X1"/>
    <property type="match status" value="1"/>
</dbReference>
<dbReference type="FunFam" id="2.60.40.1400:FF:000004">
    <property type="entry name" value="inward rectifier potassium channel 13 isoform X1"/>
    <property type="match status" value="1"/>
</dbReference>
<dbReference type="Gene3D" id="1.10.287.70">
    <property type="match status" value="1"/>
</dbReference>
<dbReference type="Gene3D" id="2.60.40.1400">
    <property type="entry name" value="G protein-activated inward rectifier potassium channel 1"/>
    <property type="match status" value="1"/>
</dbReference>
<dbReference type="InterPro" id="IPR014756">
    <property type="entry name" value="Ig_E-set"/>
</dbReference>
<dbReference type="InterPro" id="IPR041647">
    <property type="entry name" value="IRK_C"/>
</dbReference>
<dbReference type="InterPro" id="IPR016449">
    <property type="entry name" value="K_chnl_inward-rec_Kir"/>
</dbReference>
<dbReference type="InterPro" id="IPR013518">
    <property type="entry name" value="K_chnl_inward-rec_Kir_cyto"/>
</dbReference>
<dbReference type="InterPro" id="IPR008062">
    <property type="entry name" value="KCNJ13"/>
</dbReference>
<dbReference type="InterPro" id="IPR040445">
    <property type="entry name" value="Kir_TM"/>
</dbReference>
<dbReference type="PANTHER" id="PTHR11767">
    <property type="entry name" value="INWARD RECTIFIER POTASSIUM CHANNEL"/>
    <property type="match status" value="1"/>
</dbReference>
<dbReference type="PANTHER" id="PTHR11767:SF3">
    <property type="entry name" value="INWARD RECTIFIER POTASSIUM CHANNEL 13"/>
    <property type="match status" value="1"/>
</dbReference>
<dbReference type="Pfam" id="PF01007">
    <property type="entry name" value="IRK"/>
    <property type="match status" value="1"/>
</dbReference>
<dbReference type="Pfam" id="PF17655">
    <property type="entry name" value="IRK_C"/>
    <property type="match status" value="1"/>
</dbReference>
<dbReference type="PIRSF" id="PIRSF005465">
    <property type="entry name" value="GIRK_kir"/>
    <property type="match status" value="1"/>
</dbReference>
<dbReference type="PRINTS" id="PR01679">
    <property type="entry name" value="KIR7CHANNEL"/>
</dbReference>
<dbReference type="PRINTS" id="PR01320">
    <property type="entry name" value="KIRCHANNEL"/>
</dbReference>
<dbReference type="SUPFAM" id="SSF81296">
    <property type="entry name" value="E set domains"/>
    <property type="match status" value="1"/>
</dbReference>
<dbReference type="SUPFAM" id="SSF81324">
    <property type="entry name" value="Voltage-gated potassium channels"/>
    <property type="match status" value="1"/>
</dbReference>